<geneLocation type="chloroplast"/>
<sequence length="38" mass="4479">MTQPNPNKQSVELNRTSLYWGLLLIFVLAVLFSNYFFN</sequence>
<evidence type="ECO:0000255" key="1">
    <source>
        <dbReference type="HAMAP-Rule" id="MF_01317"/>
    </source>
</evidence>
<dbReference type="EMBL" id="AP005672">
    <property type="protein sequence ID" value="BAC85035.1"/>
    <property type="molecule type" value="Genomic_DNA"/>
</dbReference>
<dbReference type="RefSeq" id="NP_904185.1">
    <property type="nucleotide sequence ID" value="NC_005087.2"/>
</dbReference>
<dbReference type="RefSeq" id="YP_009477516.1">
    <property type="nucleotide sequence ID" value="NC_037465.1"/>
</dbReference>
<dbReference type="SMR" id="Q6YXL7"/>
<dbReference type="FunCoup" id="Q6YXL7">
    <property type="interactions" value="109"/>
</dbReference>
<dbReference type="STRING" id="3218.Q6YXL7"/>
<dbReference type="GeneID" id="2546816"/>
<dbReference type="GeneID" id="36487130"/>
<dbReference type="KEGG" id="ppp:2546816"/>
<dbReference type="InParanoid" id="Q6YXL7"/>
<dbReference type="OrthoDB" id="99at2759"/>
<dbReference type="Proteomes" id="UP000006727">
    <property type="component" value="Chloroplast"/>
</dbReference>
<dbReference type="GO" id="GO:0009535">
    <property type="term" value="C:chloroplast thylakoid membrane"/>
    <property type="evidence" value="ECO:0007669"/>
    <property type="project" value="UniProtKB-SubCell"/>
</dbReference>
<dbReference type="GO" id="GO:0009539">
    <property type="term" value="C:photosystem II reaction center"/>
    <property type="evidence" value="ECO:0007669"/>
    <property type="project" value="InterPro"/>
</dbReference>
<dbReference type="GO" id="GO:0015979">
    <property type="term" value="P:photosynthesis"/>
    <property type="evidence" value="ECO:0007669"/>
    <property type="project" value="UniProtKB-UniRule"/>
</dbReference>
<dbReference type="HAMAP" id="MF_01317">
    <property type="entry name" value="PSII_PsbL"/>
    <property type="match status" value="1"/>
</dbReference>
<dbReference type="InterPro" id="IPR003372">
    <property type="entry name" value="PSII_PsbL"/>
</dbReference>
<dbReference type="InterPro" id="IPR037266">
    <property type="entry name" value="PSII_PsbL_sf"/>
</dbReference>
<dbReference type="NCBIfam" id="NF001972">
    <property type="entry name" value="PRK00753.1"/>
    <property type="match status" value="1"/>
</dbReference>
<dbReference type="Pfam" id="PF02419">
    <property type="entry name" value="PsbL"/>
    <property type="match status" value="1"/>
</dbReference>
<dbReference type="SUPFAM" id="SSF161017">
    <property type="entry name" value="Photosystem II reaction center protein L, PsbL"/>
    <property type="match status" value="1"/>
</dbReference>
<protein>
    <recommendedName>
        <fullName evidence="1">Photosystem II reaction center protein L</fullName>
        <shortName evidence="1">PSII-L</shortName>
    </recommendedName>
</protein>
<name>PSBL_PHYPA</name>
<accession>Q6YXL7</accession>
<organism>
    <name type="scientific">Physcomitrium patens</name>
    <name type="common">Spreading-leaved earth moss</name>
    <name type="synonym">Physcomitrella patens</name>
    <dbReference type="NCBI Taxonomy" id="3218"/>
    <lineage>
        <taxon>Eukaryota</taxon>
        <taxon>Viridiplantae</taxon>
        <taxon>Streptophyta</taxon>
        <taxon>Embryophyta</taxon>
        <taxon>Bryophyta</taxon>
        <taxon>Bryophytina</taxon>
        <taxon>Bryopsida</taxon>
        <taxon>Funariidae</taxon>
        <taxon>Funariales</taxon>
        <taxon>Funariaceae</taxon>
        <taxon>Physcomitrium</taxon>
    </lineage>
</organism>
<keyword id="KW-0150">Chloroplast</keyword>
<keyword id="KW-0472">Membrane</keyword>
<keyword id="KW-0602">Photosynthesis</keyword>
<keyword id="KW-0604">Photosystem II</keyword>
<keyword id="KW-0934">Plastid</keyword>
<keyword id="KW-0674">Reaction center</keyword>
<keyword id="KW-1185">Reference proteome</keyword>
<keyword id="KW-0793">Thylakoid</keyword>
<keyword id="KW-0812">Transmembrane</keyword>
<keyword id="KW-1133">Transmembrane helix</keyword>
<reference key="1">
    <citation type="journal article" date="2003" name="Nucleic Acids Res.">
        <title>Complete chloroplast DNA sequence of the moss Physcomitrella patens: evidence for the loss and relocation of rpoA from the chloroplast to the nucleus.</title>
        <authorList>
            <person name="Sugiura C."/>
            <person name="Kobayashi Y."/>
            <person name="Setsuyuki A."/>
            <person name="Sugita C."/>
            <person name="Sugita M."/>
        </authorList>
    </citation>
    <scope>NUCLEOTIDE SEQUENCE [LARGE SCALE GENOMIC DNA]</scope>
    <source>
        <strain>cv. Gransden 2004</strain>
    </source>
</reference>
<proteinExistence type="inferred from homology"/>
<feature type="chain" id="PRO_0000219758" description="Photosystem II reaction center protein L">
    <location>
        <begin position="1"/>
        <end position="38"/>
    </location>
</feature>
<feature type="transmembrane region" description="Helical" evidence="1">
    <location>
        <begin position="17"/>
        <end position="37"/>
    </location>
</feature>
<comment type="function">
    <text evidence="1">One of the components of the core complex of photosystem II (PSII). PSII is a light-driven water:plastoquinone oxidoreductase that uses light energy to abstract electrons from H(2)O, generating O(2) and a proton gradient subsequently used for ATP formation. It consists of a core antenna complex that captures photons, and an electron transfer chain that converts photonic excitation into a charge separation. This subunit is found at the monomer-monomer interface and is required for correct PSII assembly and/or dimerization.</text>
</comment>
<comment type="subunit">
    <text evidence="1">PSII is composed of 1 copy each of membrane proteins PsbA, PsbB, PsbC, PsbD, PsbE, PsbF, PsbH, PsbI, PsbJ, PsbK, PsbL, PsbM, PsbT, PsbX, PsbY, PsbZ, Psb30/Ycf12, at least 3 peripheral proteins of the oxygen-evolving complex and a large number of cofactors. It forms dimeric complexes.</text>
</comment>
<comment type="subcellular location">
    <subcellularLocation>
        <location evidence="1">Plastid</location>
        <location evidence="1">Chloroplast thylakoid membrane</location>
        <topology evidence="1">Single-pass membrane protein</topology>
    </subcellularLocation>
</comment>
<comment type="similarity">
    <text evidence="1">Belongs to the PsbL family.</text>
</comment>
<gene>
    <name evidence="1" type="primary">psbL</name>
</gene>